<comment type="function">
    <text evidence="4">Involved in the development of the embryonic central nervous system, embryonic mesoderm and adult musculature.</text>
</comment>
<comment type="subcellular location">
    <subcellularLocation>
        <location evidence="7">Nucleus</location>
    </subcellularLocation>
</comment>
<comment type="alternative products">
    <event type="alternative splicing"/>
    <isoform>
        <id>P28166-1</id>
        <name>B</name>
        <sequence type="displayed"/>
    </isoform>
    <isoform>
        <id>P28166-2</id>
        <name>A</name>
        <sequence type="described" ref="VSP_009670 VSP_009671"/>
    </isoform>
</comment>
<comment type="tissue specificity">
    <text evidence="4">Mesoderm and mesodermally-derived structures in the embryo including the dorsal vessel, support cells of the gonads, and segment-specific arrays of adult muscle precursor. Also identified in motor neurons of developing CNS.</text>
</comment>
<comment type="similarity">
    <text evidence="7">Belongs to the delta-EF1/ZFH-1 C2H2-type zinc-finger family.</text>
</comment>
<comment type="sequence caution" evidence="7">
    <conflict type="miscellaneous discrepancy">
        <sequence resource="EMBL-CDS" id="AAM50023"/>
    </conflict>
    <text>Contaminating sequence.</text>
</comment>
<name>ZFH1_DROME</name>
<evidence type="ECO:0000255" key="1">
    <source>
        <dbReference type="PROSITE-ProRule" id="PRU00042"/>
    </source>
</evidence>
<evidence type="ECO:0000255" key="2">
    <source>
        <dbReference type="PROSITE-ProRule" id="PRU00108"/>
    </source>
</evidence>
<evidence type="ECO:0000256" key="3">
    <source>
        <dbReference type="SAM" id="MobiDB-lite"/>
    </source>
</evidence>
<evidence type="ECO:0000269" key="4">
    <source>
    </source>
</evidence>
<evidence type="ECO:0000269" key="5">
    <source>
    </source>
</evidence>
<evidence type="ECO:0000303" key="6">
    <source ref="4"/>
</evidence>
<evidence type="ECO:0000305" key="7"/>
<sequence>MLSCLAPSSSRFGQEDTIIQQSMPSTSPFAMQFPSLASTLLHHNQSPKHSNPGSSGIQDAHPNQPGAAADAFLVKCTQCHKRFPEYQSLSEHIASEHPHDKLNCGAAQPESDAEDEQSNMSGSSRRYAKSPLASNNNSSTANANNNSTSSQSMNNNSELAKNHNSANKMSPMCSPGSLTPGDLFAQLQHPPPQLPPHLHAQFMAAAASLAMQSARTASSPSQQQQQQLQQQQQLQQQQQHQMAMQQLLPPQLPGSNSSVGSNSAYDLDLSAPRSTSSPGSTTGDLSGAYPCMQCTASFASREQLEQHEQLHSPCGPAAVSNVSQTCRICHKAFANVYRLQRHMISHDESALLRKFKCKECDKAFKFKHHLKEHVRIHSGEKPFGCDNCGKRFSHSGSFSSHMTSKKCISMGLKLNNNRALLKRLEKSPGSASSASRRSPSDHGKGKLPEQPSLPGLPHPMSYFASDAQVQGGSAAPAPFPPFHPNYMNAALLAFPHNFMAAAAGLDPRVHPYSIQRLLQLSAAGQQQREEEREEQQKQQQHDEEETPDEPKLVMDIEEPETKEMAPTPEATEAATPIKREESREASPDPESYRSSSQAIKQEQEPLNVAEERQTPVEEHAPVEHAADLRCSRCSKQFNHPTELVQHEKVLCGLIKEELEQHFQQQQATSFALASASEEDEEDEEMDVEEEPRQESGERKVRVRTAINEEQQQQLKQHYSLNARPSRDEFRMIAARLQLDPRVVQVWFQNNRSRERKMQSFQNNQAAGAAPPMPIDSQASLTREDQPLDLSVKRDPLTPKSESSPPYIAPPSGEALNPEAINLSRKFSTSASMSPASISPSSAAALYFGAAPPPSPPNSQLDSTPRSGQAFPGLPPYMLPMSLPMEALFKMRPGGDFASNHALMNSIKLPDYRGTSLSPGGSEKRSWRDDDSRISHEDEFGAGVLMPPKPRRGKAETHGHAGDPDLPYVCDQCDKAFAKQSSLARHKYEHSGQRPYQCIECPKAFKHKHHLTEHKRLHSGEKPFQCSKCLKRFSHSGSYSQHMNHRYSYCKPYRE</sequence>
<gene>
    <name type="primary">zfh1</name>
    <name type="synonym">zfh-1</name>
    <name type="ORF">CG1322</name>
</gene>
<feature type="chain" id="PRO_0000047241" description="Zinc finger protein 1">
    <location>
        <begin position="1"/>
        <end position="1054"/>
    </location>
</feature>
<feature type="zinc finger region" description="C2H2-type 1" evidence="1">
    <location>
        <begin position="74"/>
        <end position="97"/>
    </location>
</feature>
<feature type="zinc finger region" description="C2H2-type 2" evidence="1">
    <location>
        <begin position="289"/>
        <end position="311"/>
    </location>
</feature>
<feature type="zinc finger region" description="C2H2-type 3" evidence="1">
    <location>
        <begin position="324"/>
        <end position="346"/>
    </location>
</feature>
<feature type="zinc finger region" description="C2H2-type 4" evidence="1">
    <location>
        <begin position="355"/>
        <end position="377"/>
    </location>
</feature>
<feature type="zinc finger region" description="C2H2-type 5" evidence="1">
    <location>
        <begin position="383"/>
        <end position="407"/>
    </location>
</feature>
<feature type="zinc finger region" description="C2H2-type 6" evidence="1">
    <location>
        <begin position="628"/>
        <end position="651"/>
    </location>
</feature>
<feature type="DNA-binding region" description="Homeobox" evidence="2">
    <location>
        <begin position="699"/>
        <end position="758"/>
    </location>
</feature>
<feature type="zinc finger region" description="C2H2-type 7" evidence="1">
    <location>
        <begin position="967"/>
        <end position="989"/>
    </location>
</feature>
<feature type="zinc finger region" description="C2H2-type 8" evidence="1">
    <location>
        <begin position="995"/>
        <end position="1017"/>
    </location>
</feature>
<feature type="zinc finger region" description="C2H2-type 9" evidence="1">
    <location>
        <begin position="1023"/>
        <end position="1044"/>
    </location>
</feature>
<feature type="region of interest" description="Disordered" evidence="3">
    <location>
        <begin position="42"/>
        <end position="65"/>
    </location>
</feature>
<feature type="region of interest" description="Disordered" evidence="3">
    <location>
        <begin position="99"/>
        <end position="197"/>
    </location>
</feature>
<feature type="region of interest" description="Disordered" evidence="3">
    <location>
        <begin position="211"/>
        <end position="283"/>
    </location>
</feature>
<feature type="region of interest" description="Disordered" evidence="3">
    <location>
        <begin position="424"/>
        <end position="463"/>
    </location>
</feature>
<feature type="region of interest" description="Disordered" evidence="3">
    <location>
        <begin position="521"/>
        <end position="623"/>
    </location>
</feature>
<feature type="region of interest" description="Disordered" evidence="3">
    <location>
        <begin position="663"/>
        <end position="722"/>
    </location>
</feature>
<feature type="region of interest" description="Disordered" evidence="3">
    <location>
        <begin position="755"/>
        <end position="815"/>
    </location>
</feature>
<feature type="region of interest" description="Disordered" evidence="3">
    <location>
        <begin position="848"/>
        <end position="871"/>
    </location>
</feature>
<feature type="region of interest" description="Disordered" evidence="3">
    <location>
        <begin position="910"/>
        <end position="958"/>
    </location>
</feature>
<feature type="compositionally biased region" description="Polar residues" evidence="3">
    <location>
        <begin position="42"/>
        <end position="57"/>
    </location>
</feature>
<feature type="compositionally biased region" description="Low complexity" evidence="3">
    <location>
        <begin position="133"/>
        <end position="157"/>
    </location>
</feature>
<feature type="compositionally biased region" description="Polar residues" evidence="3">
    <location>
        <begin position="158"/>
        <end position="168"/>
    </location>
</feature>
<feature type="compositionally biased region" description="Low complexity" evidence="3">
    <location>
        <begin position="222"/>
        <end position="249"/>
    </location>
</feature>
<feature type="compositionally biased region" description="Polar residues" evidence="3">
    <location>
        <begin position="253"/>
        <end position="264"/>
    </location>
</feature>
<feature type="compositionally biased region" description="Low complexity" evidence="3">
    <location>
        <begin position="274"/>
        <end position="283"/>
    </location>
</feature>
<feature type="compositionally biased region" description="Low complexity" evidence="3">
    <location>
        <begin position="427"/>
        <end position="437"/>
    </location>
</feature>
<feature type="compositionally biased region" description="Basic and acidic residues" evidence="3">
    <location>
        <begin position="438"/>
        <end position="447"/>
    </location>
</feature>
<feature type="compositionally biased region" description="Basic and acidic residues" evidence="3">
    <location>
        <begin position="527"/>
        <end position="541"/>
    </location>
</feature>
<feature type="compositionally biased region" description="Basic and acidic residues" evidence="3">
    <location>
        <begin position="548"/>
        <end position="563"/>
    </location>
</feature>
<feature type="compositionally biased region" description="Low complexity" evidence="3">
    <location>
        <begin position="564"/>
        <end position="576"/>
    </location>
</feature>
<feature type="compositionally biased region" description="Basic and acidic residues" evidence="3">
    <location>
        <begin position="577"/>
        <end position="586"/>
    </location>
</feature>
<feature type="compositionally biased region" description="Basic and acidic residues" evidence="3">
    <location>
        <begin position="609"/>
        <end position="623"/>
    </location>
</feature>
<feature type="compositionally biased region" description="Acidic residues" evidence="3">
    <location>
        <begin position="676"/>
        <end position="689"/>
    </location>
</feature>
<feature type="compositionally biased region" description="Basic and acidic residues" evidence="3">
    <location>
        <begin position="690"/>
        <end position="699"/>
    </location>
</feature>
<feature type="compositionally biased region" description="Polar residues" evidence="3">
    <location>
        <begin position="707"/>
        <end position="719"/>
    </location>
</feature>
<feature type="compositionally biased region" description="Basic and acidic residues" evidence="3">
    <location>
        <begin position="781"/>
        <end position="796"/>
    </location>
</feature>
<feature type="compositionally biased region" description="Polar residues" evidence="3">
    <location>
        <begin position="857"/>
        <end position="866"/>
    </location>
</feature>
<feature type="compositionally biased region" description="Basic and acidic residues" evidence="3">
    <location>
        <begin position="921"/>
        <end position="938"/>
    </location>
</feature>
<feature type="modified residue" description="Phosphoserine" evidence="5">
    <location>
        <position position="582"/>
    </location>
</feature>
<feature type="modified residue" description="Phosphoserine" evidence="5">
    <location>
        <position position="586"/>
    </location>
</feature>
<feature type="modified residue" description="Phosphoserine" evidence="5">
    <location>
        <position position="934"/>
    </location>
</feature>
<feature type="splice variant" id="VSP_009670" description="In isoform A." evidence="6">
    <location>
        <begin position="1"/>
        <end position="307"/>
    </location>
</feature>
<feature type="splice variant" id="VSP_009671" description="In isoform A." evidence="6">
    <original>EQLHSPCGPAAVSNVSQ</original>
    <variation>MSAAACLLSSSTSSFEK</variation>
    <location>
        <begin position="308"/>
        <end position="324"/>
    </location>
</feature>
<feature type="sequence conflict" description="In Ref. 4; AAR82746." evidence="7" ref="4">
    <original>Q</original>
    <variation>K</variation>
    <location>
        <position position="78"/>
    </location>
</feature>
<feature type="sequence conflict" description="In Ref. 4; AAR82746." evidence="7" ref="4">
    <original>S</original>
    <variation>T</variation>
    <location>
        <position position="147"/>
    </location>
</feature>
<feature type="sequence conflict" description="In Ref. 1; AAA29050." evidence="7" ref="1">
    <original>Q</original>
    <variation>QMQQQQQ</variation>
    <location>
        <position position="239"/>
    </location>
</feature>
<feature type="sequence conflict" description="In Ref. 1; AAA29050, 4; AAR82746 and 5; AAM50023." evidence="7" ref="1 4 5">
    <original>A</original>
    <variation>S</variation>
    <location>
        <position position="625"/>
    </location>
</feature>
<feature type="sequence conflict" description="In Ref. 1; AAA29050." evidence="7" ref="1">
    <original>A</original>
    <variation>V</variation>
    <location>
        <position position="954"/>
    </location>
</feature>
<reference key="1">
    <citation type="journal article" date="1991" name="Mech. Dev.">
        <title>The Drosophila zfh-1 and zfh-2 genes encode novel proteins containing both zinc-finger and homeodomain motifs.</title>
        <authorList>
            <person name="Fortini M.E."/>
            <person name="Lai Z."/>
            <person name="Rubin G.M."/>
        </authorList>
    </citation>
    <scope>NUCLEOTIDE SEQUENCE [GENOMIC DNA]</scope>
    <scope>FUNCTION</scope>
    <scope>TISSUE SPECIFICITY</scope>
</reference>
<reference key="2">
    <citation type="journal article" date="2000" name="Science">
        <title>The genome sequence of Drosophila melanogaster.</title>
        <authorList>
            <person name="Adams M.D."/>
            <person name="Celniker S.E."/>
            <person name="Holt R.A."/>
            <person name="Evans C.A."/>
            <person name="Gocayne J.D."/>
            <person name="Amanatides P.G."/>
            <person name="Scherer S.E."/>
            <person name="Li P.W."/>
            <person name="Hoskins R.A."/>
            <person name="Galle R.F."/>
            <person name="George R.A."/>
            <person name="Lewis S.E."/>
            <person name="Richards S."/>
            <person name="Ashburner M."/>
            <person name="Henderson S.N."/>
            <person name="Sutton G.G."/>
            <person name="Wortman J.R."/>
            <person name="Yandell M.D."/>
            <person name="Zhang Q."/>
            <person name="Chen L.X."/>
            <person name="Brandon R.C."/>
            <person name="Rogers Y.-H.C."/>
            <person name="Blazej R.G."/>
            <person name="Champe M."/>
            <person name="Pfeiffer B.D."/>
            <person name="Wan K.H."/>
            <person name="Doyle C."/>
            <person name="Baxter E.G."/>
            <person name="Helt G."/>
            <person name="Nelson C.R."/>
            <person name="Miklos G.L.G."/>
            <person name="Abril J.F."/>
            <person name="Agbayani A."/>
            <person name="An H.-J."/>
            <person name="Andrews-Pfannkoch C."/>
            <person name="Baldwin D."/>
            <person name="Ballew R.M."/>
            <person name="Basu A."/>
            <person name="Baxendale J."/>
            <person name="Bayraktaroglu L."/>
            <person name="Beasley E.M."/>
            <person name="Beeson K.Y."/>
            <person name="Benos P.V."/>
            <person name="Berman B.P."/>
            <person name="Bhandari D."/>
            <person name="Bolshakov S."/>
            <person name="Borkova D."/>
            <person name="Botchan M.R."/>
            <person name="Bouck J."/>
            <person name="Brokstein P."/>
            <person name="Brottier P."/>
            <person name="Burtis K.C."/>
            <person name="Busam D.A."/>
            <person name="Butler H."/>
            <person name="Cadieu E."/>
            <person name="Center A."/>
            <person name="Chandra I."/>
            <person name="Cherry J.M."/>
            <person name="Cawley S."/>
            <person name="Dahlke C."/>
            <person name="Davenport L.B."/>
            <person name="Davies P."/>
            <person name="de Pablos B."/>
            <person name="Delcher A."/>
            <person name="Deng Z."/>
            <person name="Mays A.D."/>
            <person name="Dew I."/>
            <person name="Dietz S.M."/>
            <person name="Dodson K."/>
            <person name="Doup L.E."/>
            <person name="Downes M."/>
            <person name="Dugan-Rocha S."/>
            <person name="Dunkov B.C."/>
            <person name="Dunn P."/>
            <person name="Durbin K.J."/>
            <person name="Evangelista C.C."/>
            <person name="Ferraz C."/>
            <person name="Ferriera S."/>
            <person name="Fleischmann W."/>
            <person name="Fosler C."/>
            <person name="Gabrielian A.E."/>
            <person name="Garg N.S."/>
            <person name="Gelbart W.M."/>
            <person name="Glasser K."/>
            <person name="Glodek A."/>
            <person name="Gong F."/>
            <person name="Gorrell J.H."/>
            <person name="Gu Z."/>
            <person name="Guan P."/>
            <person name="Harris M."/>
            <person name="Harris N.L."/>
            <person name="Harvey D.A."/>
            <person name="Heiman T.J."/>
            <person name="Hernandez J.R."/>
            <person name="Houck J."/>
            <person name="Hostin D."/>
            <person name="Houston K.A."/>
            <person name="Howland T.J."/>
            <person name="Wei M.-H."/>
            <person name="Ibegwam C."/>
            <person name="Jalali M."/>
            <person name="Kalush F."/>
            <person name="Karpen G.H."/>
            <person name="Ke Z."/>
            <person name="Kennison J.A."/>
            <person name="Ketchum K.A."/>
            <person name="Kimmel B.E."/>
            <person name="Kodira C.D."/>
            <person name="Kraft C.L."/>
            <person name="Kravitz S."/>
            <person name="Kulp D."/>
            <person name="Lai Z."/>
            <person name="Lasko P."/>
            <person name="Lei Y."/>
            <person name="Levitsky A.A."/>
            <person name="Li J.H."/>
            <person name="Li Z."/>
            <person name="Liang Y."/>
            <person name="Lin X."/>
            <person name="Liu X."/>
            <person name="Mattei B."/>
            <person name="McIntosh T.C."/>
            <person name="McLeod M.P."/>
            <person name="McPherson D."/>
            <person name="Merkulov G."/>
            <person name="Milshina N.V."/>
            <person name="Mobarry C."/>
            <person name="Morris J."/>
            <person name="Moshrefi A."/>
            <person name="Mount S.M."/>
            <person name="Moy M."/>
            <person name="Murphy B."/>
            <person name="Murphy L."/>
            <person name="Muzny D.M."/>
            <person name="Nelson D.L."/>
            <person name="Nelson D.R."/>
            <person name="Nelson K.A."/>
            <person name="Nixon K."/>
            <person name="Nusskern D.R."/>
            <person name="Pacleb J.M."/>
            <person name="Palazzolo M."/>
            <person name="Pittman G.S."/>
            <person name="Pan S."/>
            <person name="Pollard J."/>
            <person name="Puri V."/>
            <person name="Reese M.G."/>
            <person name="Reinert K."/>
            <person name="Remington K."/>
            <person name="Saunders R.D.C."/>
            <person name="Scheeler F."/>
            <person name="Shen H."/>
            <person name="Shue B.C."/>
            <person name="Siden-Kiamos I."/>
            <person name="Simpson M."/>
            <person name="Skupski M.P."/>
            <person name="Smith T.J."/>
            <person name="Spier E."/>
            <person name="Spradling A.C."/>
            <person name="Stapleton M."/>
            <person name="Strong R."/>
            <person name="Sun E."/>
            <person name="Svirskas R."/>
            <person name="Tector C."/>
            <person name="Turner R."/>
            <person name="Venter E."/>
            <person name="Wang A.H."/>
            <person name="Wang X."/>
            <person name="Wang Z.-Y."/>
            <person name="Wassarman D.A."/>
            <person name="Weinstock G.M."/>
            <person name="Weissenbach J."/>
            <person name="Williams S.M."/>
            <person name="Woodage T."/>
            <person name="Worley K.C."/>
            <person name="Wu D."/>
            <person name="Yang S."/>
            <person name="Yao Q.A."/>
            <person name="Ye J."/>
            <person name="Yeh R.-F."/>
            <person name="Zaveri J.S."/>
            <person name="Zhan M."/>
            <person name="Zhang G."/>
            <person name="Zhao Q."/>
            <person name="Zheng L."/>
            <person name="Zheng X.H."/>
            <person name="Zhong F.N."/>
            <person name="Zhong W."/>
            <person name="Zhou X."/>
            <person name="Zhu S.C."/>
            <person name="Zhu X."/>
            <person name="Smith H.O."/>
            <person name="Gibbs R.A."/>
            <person name="Myers E.W."/>
            <person name="Rubin G.M."/>
            <person name="Venter J.C."/>
        </authorList>
    </citation>
    <scope>NUCLEOTIDE SEQUENCE [LARGE SCALE GENOMIC DNA]</scope>
    <source>
        <strain>Berkeley</strain>
    </source>
</reference>
<reference key="3">
    <citation type="journal article" date="2002" name="Genome Biol.">
        <title>Annotation of the Drosophila melanogaster euchromatic genome: a systematic review.</title>
        <authorList>
            <person name="Misra S."/>
            <person name="Crosby M.A."/>
            <person name="Mungall C.J."/>
            <person name="Matthews B.B."/>
            <person name="Campbell K.S."/>
            <person name="Hradecky P."/>
            <person name="Huang Y."/>
            <person name="Kaminker J.S."/>
            <person name="Millburn G.H."/>
            <person name="Prochnik S.E."/>
            <person name="Smith C.D."/>
            <person name="Tupy J.L."/>
            <person name="Whitfield E.J."/>
            <person name="Bayraktaroglu L."/>
            <person name="Berman B.P."/>
            <person name="Bettencourt B.R."/>
            <person name="Celniker S.E."/>
            <person name="de Grey A.D.N.J."/>
            <person name="Drysdale R.A."/>
            <person name="Harris N.L."/>
            <person name="Richter J."/>
            <person name="Russo S."/>
            <person name="Schroeder A.J."/>
            <person name="Shu S.Q."/>
            <person name="Stapleton M."/>
            <person name="Yamada C."/>
            <person name="Ashburner M."/>
            <person name="Gelbart W.M."/>
            <person name="Rubin G.M."/>
            <person name="Lewis S.E."/>
        </authorList>
    </citation>
    <scope>GENOME REANNOTATION</scope>
    <scope>ALTERNATIVE SPLICING</scope>
    <source>
        <strain>Berkeley</strain>
    </source>
</reference>
<reference key="4">
    <citation type="submission" date="2003-12" db="EMBL/GenBank/DDBJ databases">
        <authorList>
            <person name="Stapleton M."/>
            <person name="Brokstein P."/>
            <person name="Hong L."/>
            <person name="Agbayani A."/>
            <person name="Carlson J.W."/>
            <person name="Champe M."/>
            <person name="Chavez C."/>
            <person name="Dorsett V."/>
            <person name="Dresnek D."/>
            <person name="Farfan D."/>
            <person name="Frise E."/>
            <person name="George R.A."/>
            <person name="Gonzalez M."/>
            <person name="Guarin H."/>
            <person name="Kronmiller B."/>
            <person name="Li P.W."/>
            <person name="Liao G."/>
            <person name="Miranda A."/>
            <person name="Mungall C.J."/>
            <person name="Nunoo J."/>
            <person name="Pacleb J.M."/>
            <person name="Paragas V."/>
            <person name="Park S."/>
            <person name="Patel S."/>
            <person name="Phouanenavong S."/>
            <person name="Wan K.H."/>
            <person name="Yu C."/>
            <person name="Lewis S.E."/>
            <person name="Rubin G.M."/>
            <person name="Celniker S.E."/>
        </authorList>
    </citation>
    <scope>NUCLEOTIDE SEQUENCE [LARGE SCALE MRNA] (ISOFORM A)</scope>
    <scope>NUCLEOTIDE SEQUENCE [LARGE SCALE MRNA] OF 30-1054 (ISOFORM B)</scope>
    <source>
        <strain>Berkeley</strain>
        <tissue>Embryo</tissue>
    </source>
</reference>
<reference key="5">
    <citation type="journal article" date="2002" name="Genome Biol.">
        <title>A Drosophila full-length cDNA resource.</title>
        <authorList>
            <person name="Stapleton M."/>
            <person name="Carlson J.W."/>
            <person name="Brokstein P."/>
            <person name="Yu C."/>
            <person name="Champe M."/>
            <person name="George R.A."/>
            <person name="Guarin H."/>
            <person name="Kronmiller B."/>
            <person name="Pacleb J.M."/>
            <person name="Park S."/>
            <person name="Wan K.H."/>
            <person name="Rubin G.M."/>
            <person name="Celniker S.E."/>
        </authorList>
    </citation>
    <scope>NUCLEOTIDE SEQUENCE [LARGE SCALE MRNA] OF 540-1054</scope>
    <source>
        <strain>Berkeley</strain>
        <tissue>Embryo</tissue>
    </source>
</reference>
<reference key="6">
    <citation type="journal article" date="2008" name="J. Proteome Res.">
        <title>Phosphoproteome analysis of Drosophila melanogaster embryos.</title>
        <authorList>
            <person name="Zhai B."/>
            <person name="Villen J."/>
            <person name="Beausoleil S.A."/>
            <person name="Mintseris J."/>
            <person name="Gygi S.P."/>
        </authorList>
    </citation>
    <scope>PHOSPHORYLATION [LARGE SCALE ANALYSIS] AT SER-582; SER-586 AND SER-934</scope>
    <scope>IDENTIFICATION BY MASS SPECTROMETRY</scope>
    <source>
        <tissue>Embryo</tissue>
    </source>
</reference>
<organism>
    <name type="scientific">Drosophila melanogaster</name>
    <name type="common">Fruit fly</name>
    <dbReference type="NCBI Taxonomy" id="7227"/>
    <lineage>
        <taxon>Eukaryota</taxon>
        <taxon>Metazoa</taxon>
        <taxon>Ecdysozoa</taxon>
        <taxon>Arthropoda</taxon>
        <taxon>Hexapoda</taxon>
        <taxon>Insecta</taxon>
        <taxon>Pterygota</taxon>
        <taxon>Neoptera</taxon>
        <taxon>Endopterygota</taxon>
        <taxon>Diptera</taxon>
        <taxon>Brachycera</taxon>
        <taxon>Muscomorpha</taxon>
        <taxon>Ephydroidea</taxon>
        <taxon>Drosophilidae</taxon>
        <taxon>Drosophila</taxon>
        <taxon>Sophophora</taxon>
    </lineage>
</organism>
<dbReference type="EMBL" id="M63449">
    <property type="protein sequence ID" value="AAA29050.1"/>
    <property type="molecule type" value="Genomic_DNA"/>
</dbReference>
<dbReference type="EMBL" id="AE014297">
    <property type="protein sequence ID" value="AAF57083.1"/>
    <property type="molecule type" value="Genomic_DNA"/>
</dbReference>
<dbReference type="EMBL" id="AE014297">
    <property type="protein sequence ID" value="AAF57084.1"/>
    <property type="molecule type" value="Genomic_DNA"/>
</dbReference>
<dbReference type="EMBL" id="BT003277">
    <property type="protein sequence ID" value="AAO25034.1"/>
    <property type="molecule type" value="mRNA"/>
</dbReference>
<dbReference type="EMBL" id="BT011080">
    <property type="protein sequence ID" value="AAR82746.1"/>
    <property type="molecule type" value="mRNA"/>
</dbReference>
<dbReference type="EMBL" id="AY118654">
    <property type="protein sequence ID" value="AAM50023.1"/>
    <property type="status" value="ALT_SEQ"/>
    <property type="molecule type" value="mRNA"/>
</dbReference>
<dbReference type="PIR" id="S33641">
    <property type="entry name" value="S33641"/>
</dbReference>
<dbReference type="RefSeq" id="NP_476850.1">
    <molecule id="P28166-1"/>
    <property type="nucleotide sequence ID" value="NM_057502.5"/>
</dbReference>
<dbReference type="RefSeq" id="NP_733402.1">
    <molecule id="P28166-2"/>
    <property type="nucleotide sequence ID" value="NM_170523.3"/>
</dbReference>
<dbReference type="SMR" id="P28166"/>
<dbReference type="BioGRID" id="68501">
    <property type="interactions" value="28"/>
</dbReference>
<dbReference type="ELM" id="P28166"/>
<dbReference type="FunCoup" id="P28166">
    <property type="interactions" value="1234"/>
</dbReference>
<dbReference type="IntAct" id="P28166">
    <property type="interactions" value="13"/>
</dbReference>
<dbReference type="MINT" id="P28166"/>
<dbReference type="STRING" id="7227.FBpp0303607"/>
<dbReference type="iPTMnet" id="P28166"/>
<dbReference type="PaxDb" id="7227-FBpp0085063"/>
<dbReference type="DNASU" id="43650"/>
<dbReference type="EnsemblMetazoa" id="FBtr0085701">
    <molecule id="P28166-1"/>
    <property type="protein sequence ID" value="FBpp0085063"/>
    <property type="gene ID" value="FBgn0004606"/>
</dbReference>
<dbReference type="EnsemblMetazoa" id="FBtr0085702">
    <molecule id="P28166-2"/>
    <property type="protein sequence ID" value="FBpp0085064"/>
    <property type="gene ID" value="FBgn0004606"/>
</dbReference>
<dbReference type="GeneID" id="43650"/>
<dbReference type="KEGG" id="dme:Dmel_CG1322"/>
<dbReference type="AGR" id="FB:FBgn0004606"/>
<dbReference type="CTD" id="43650"/>
<dbReference type="FlyBase" id="FBgn0004606">
    <property type="gene designation" value="zfh1"/>
</dbReference>
<dbReference type="VEuPathDB" id="VectorBase:FBgn0004606"/>
<dbReference type="eggNOG" id="KOG3623">
    <property type="taxonomic scope" value="Eukaryota"/>
</dbReference>
<dbReference type="GeneTree" id="ENSGT00870000136508"/>
<dbReference type="HOGENOM" id="CLU_010698_0_0_1"/>
<dbReference type="InParanoid" id="P28166"/>
<dbReference type="OMA" id="SYCKREP"/>
<dbReference type="OrthoDB" id="7491548at2759"/>
<dbReference type="PhylomeDB" id="P28166"/>
<dbReference type="Reactome" id="R-DME-9762293">
    <property type="pathway name" value="Regulation of CDH11 gene transcription"/>
</dbReference>
<dbReference type="SignaLink" id="P28166"/>
<dbReference type="BioGRID-ORCS" id="43650">
    <property type="hits" value="0 hits in 3 CRISPR screens"/>
</dbReference>
<dbReference type="GenomeRNAi" id="43650"/>
<dbReference type="PRO" id="PR:P28166"/>
<dbReference type="Proteomes" id="UP000000803">
    <property type="component" value="Chromosome 3R"/>
</dbReference>
<dbReference type="Bgee" id="FBgn0004606">
    <property type="expression patterns" value="Expressed in hemocyte (sensu Nematoda and Protostomia) in arthropod fat body and 195 other cell types or tissues"/>
</dbReference>
<dbReference type="GO" id="GO:0005634">
    <property type="term" value="C:nucleus"/>
    <property type="evidence" value="ECO:0000314"/>
    <property type="project" value="FlyBase"/>
</dbReference>
<dbReference type="GO" id="GO:0000981">
    <property type="term" value="F:DNA-binding transcription factor activity, RNA polymerase II-specific"/>
    <property type="evidence" value="ECO:0000314"/>
    <property type="project" value="FlyBase"/>
</dbReference>
<dbReference type="GO" id="GO:0000978">
    <property type="term" value="F:RNA polymerase II cis-regulatory region sequence-specific DNA binding"/>
    <property type="evidence" value="ECO:0000318"/>
    <property type="project" value="GO_Central"/>
</dbReference>
<dbReference type="GO" id="GO:0000977">
    <property type="term" value="F:RNA polymerase II transcription regulatory region sequence-specific DNA binding"/>
    <property type="evidence" value="ECO:0000314"/>
    <property type="project" value="FlyBase"/>
</dbReference>
<dbReference type="GO" id="GO:0008270">
    <property type="term" value="F:zinc ion binding"/>
    <property type="evidence" value="ECO:0007669"/>
    <property type="project" value="UniProtKB-KW"/>
</dbReference>
<dbReference type="GO" id="GO:0007413">
    <property type="term" value="P:axonal fasciculation"/>
    <property type="evidence" value="ECO:0000315"/>
    <property type="project" value="FlyBase"/>
</dbReference>
<dbReference type="GO" id="GO:0007417">
    <property type="term" value="P:central nervous system development"/>
    <property type="evidence" value="ECO:0000318"/>
    <property type="project" value="GO_Central"/>
</dbReference>
<dbReference type="GO" id="GO:0001837">
    <property type="term" value="P:epithelial to mesenchymal transition"/>
    <property type="evidence" value="ECO:0000315"/>
    <property type="project" value="FlyBase"/>
</dbReference>
<dbReference type="GO" id="GO:0061321">
    <property type="term" value="P:garland nephrocyte differentiation"/>
    <property type="evidence" value="ECO:0000315"/>
    <property type="project" value="FlyBase"/>
</dbReference>
<dbReference type="GO" id="GO:0008354">
    <property type="term" value="P:germ cell migration"/>
    <property type="evidence" value="ECO:0000315"/>
    <property type="project" value="FlyBase"/>
</dbReference>
<dbReference type="GO" id="GO:0007516">
    <property type="term" value="P:hemocyte development"/>
    <property type="evidence" value="ECO:0000315"/>
    <property type="project" value="FlyBase"/>
</dbReference>
<dbReference type="GO" id="GO:0048542">
    <property type="term" value="P:lymph gland development"/>
    <property type="evidence" value="ECO:0000315"/>
    <property type="project" value="FlyBase"/>
</dbReference>
<dbReference type="GO" id="GO:0007498">
    <property type="term" value="P:mesoderm development"/>
    <property type="evidence" value="ECO:0000316"/>
    <property type="project" value="FlyBase"/>
</dbReference>
<dbReference type="GO" id="GO:0008045">
    <property type="term" value="P:motor neuron axon guidance"/>
    <property type="evidence" value="ECO:0000315"/>
    <property type="project" value="FlyBase"/>
</dbReference>
<dbReference type="GO" id="GO:0046716">
    <property type="term" value="P:muscle cell cellular homeostasis"/>
    <property type="evidence" value="ECO:0000315"/>
    <property type="project" value="FlyBase"/>
</dbReference>
<dbReference type="GO" id="GO:0051148">
    <property type="term" value="P:negative regulation of muscle cell differentiation"/>
    <property type="evidence" value="ECO:0000315"/>
    <property type="project" value="FlyBase"/>
</dbReference>
<dbReference type="GO" id="GO:0000122">
    <property type="term" value="P:negative regulation of transcription by RNA polymerase II"/>
    <property type="evidence" value="ECO:0000314"/>
    <property type="project" value="FlyBase"/>
</dbReference>
<dbReference type="GO" id="GO:0007399">
    <property type="term" value="P:nervous system development"/>
    <property type="evidence" value="ECO:0000270"/>
    <property type="project" value="FlyBase"/>
</dbReference>
<dbReference type="GO" id="GO:0006357">
    <property type="term" value="P:regulation of transcription by RNA polymerase II"/>
    <property type="evidence" value="ECO:0000318"/>
    <property type="project" value="GO_Central"/>
</dbReference>
<dbReference type="GO" id="GO:0048103">
    <property type="term" value="P:somatic stem cell division"/>
    <property type="evidence" value="ECO:0000315"/>
    <property type="project" value="FlyBase"/>
</dbReference>
<dbReference type="GO" id="GO:0035019">
    <property type="term" value="P:somatic stem cell population maintenance"/>
    <property type="evidence" value="ECO:0000315"/>
    <property type="project" value="FlyBase"/>
</dbReference>
<dbReference type="CDD" id="cd00086">
    <property type="entry name" value="homeodomain"/>
    <property type="match status" value="1"/>
</dbReference>
<dbReference type="FunFam" id="3.30.160.60:FF:000013">
    <property type="entry name" value="Putative zinc finger E-box-binding homeobox 2"/>
    <property type="match status" value="2"/>
</dbReference>
<dbReference type="FunFam" id="3.30.160.60:FF:000045">
    <property type="entry name" value="ZFP69 zinc finger protein B"/>
    <property type="match status" value="1"/>
</dbReference>
<dbReference type="FunFam" id="3.30.160.60:FF:000744">
    <property type="entry name" value="zinc finger E-box-binding homeobox 1"/>
    <property type="match status" value="1"/>
</dbReference>
<dbReference type="FunFam" id="1.10.10.60:FF:000632">
    <property type="entry name" value="Zinc finger protein 1"/>
    <property type="match status" value="1"/>
</dbReference>
<dbReference type="FunFam" id="3.30.160.60:FF:000072">
    <property type="entry name" value="zinc finger protein 143 isoform X1"/>
    <property type="match status" value="1"/>
</dbReference>
<dbReference type="Gene3D" id="3.30.160.60">
    <property type="entry name" value="Classic Zinc Finger"/>
    <property type="match status" value="6"/>
</dbReference>
<dbReference type="Gene3D" id="1.10.10.60">
    <property type="entry name" value="Homeodomain-like"/>
    <property type="match status" value="1"/>
</dbReference>
<dbReference type="InterPro" id="IPR001356">
    <property type="entry name" value="HD"/>
</dbReference>
<dbReference type="InterPro" id="IPR017970">
    <property type="entry name" value="Homeobox_CS"/>
</dbReference>
<dbReference type="InterPro" id="IPR009057">
    <property type="entry name" value="Homeodomain-like_sf"/>
</dbReference>
<dbReference type="InterPro" id="IPR036236">
    <property type="entry name" value="Znf_C2H2_sf"/>
</dbReference>
<dbReference type="InterPro" id="IPR013087">
    <property type="entry name" value="Znf_C2H2_type"/>
</dbReference>
<dbReference type="InterPro" id="IPR051574">
    <property type="entry name" value="ZnF_E-box_Homeobox"/>
</dbReference>
<dbReference type="PANTHER" id="PTHR24391">
    <property type="entry name" value="HISTONE H4 TRANSCRIPTION FACTOR-RELATED"/>
    <property type="match status" value="1"/>
</dbReference>
<dbReference type="PANTHER" id="PTHR24391:SF27">
    <property type="entry name" value="ZINC FINGER PROTEIN 1"/>
    <property type="match status" value="1"/>
</dbReference>
<dbReference type="Pfam" id="PF00046">
    <property type="entry name" value="Homeodomain"/>
    <property type="match status" value="1"/>
</dbReference>
<dbReference type="Pfam" id="PF00096">
    <property type="entry name" value="zf-C2H2"/>
    <property type="match status" value="3"/>
</dbReference>
<dbReference type="SMART" id="SM00389">
    <property type="entry name" value="HOX"/>
    <property type="match status" value="1"/>
</dbReference>
<dbReference type="SMART" id="SM00355">
    <property type="entry name" value="ZnF_C2H2"/>
    <property type="match status" value="9"/>
</dbReference>
<dbReference type="SUPFAM" id="SSF57667">
    <property type="entry name" value="beta-beta-alpha zinc fingers"/>
    <property type="match status" value="4"/>
</dbReference>
<dbReference type="SUPFAM" id="SSF46689">
    <property type="entry name" value="Homeodomain-like"/>
    <property type="match status" value="1"/>
</dbReference>
<dbReference type="PROSITE" id="PS00027">
    <property type="entry name" value="HOMEOBOX_1"/>
    <property type="match status" value="1"/>
</dbReference>
<dbReference type="PROSITE" id="PS50071">
    <property type="entry name" value="HOMEOBOX_2"/>
    <property type="match status" value="1"/>
</dbReference>
<dbReference type="PROSITE" id="PS00028">
    <property type="entry name" value="ZINC_FINGER_C2H2_1"/>
    <property type="match status" value="6"/>
</dbReference>
<dbReference type="PROSITE" id="PS50157">
    <property type="entry name" value="ZINC_FINGER_C2H2_2"/>
    <property type="match status" value="9"/>
</dbReference>
<protein>
    <recommendedName>
        <fullName>Zinc finger protein 1</fullName>
    </recommendedName>
    <alternativeName>
        <fullName>Zinc finger homeodomain protein 1</fullName>
    </alternativeName>
</protein>
<proteinExistence type="evidence at protein level"/>
<accession>P28166</accession>
<accession>Q59DT3</accession>
<accession>Q6NP51</accession>
<accession>Q8MSQ8</accession>
<accession>Q9VA39</accession>
<accession>Q9VA40</accession>
<keyword id="KW-0025">Alternative splicing</keyword>
<keyword id="KW-0238">DNA-binding</keyword>
<keyword id="KW-0371">Homeobox</keyword>
<keyword id="KW-0479">Metal-binding</keyword>
<keyword id="KW-0539">Nucleus</keyword>
<keyword id="KW-0597">Phosphoprotein</keyword>
<keyword id="KW-1185">Reference proteome</keyword>
<keyword id="KW-0677">Repeat</keyword>
<keyword id="KW-0862">Zinc</keyword>
<keyword id="KW-0863">Zinc-finger</keyword>